<gene>
    <name type="primary">NR3C2</name>
    <name type="synonym">MLR</name>
</gene>
<keyword id="KW-0963">Cytoplasm</keyword>
<keyword id="KW-0238">DNA-binding</keyword>
<keyword id="KW-0446">Lipid-binding</keyword>
<keyword id="KW-0479">Metal-binding</keyword>
<keyword id="KW-0539">Nucleus</keyword>
<keyword id="KW-0597">Phosphoprotein</keyword>
<keyword id="KW-0675">Receptor</keyword>
<keyword id="KW-0754">Steroid-binding</keyword>
<keyword id="KW-0804">Transcription</keyword>
<keyword id="KW-0805">Transcription regulation</keyword>
<keyword id="KW-0862">Zinc</keyword>
<keyword id="KW-0863">Zinc-finger</keyword>
<name>MCR_TUPBE</name>
<protein>
    <recommendedName>
        <fullName>Mineralocorticoid receptor</fullName>
        <shortName>MR</shortName>
    </recommendedName>
    <alternativeName>
        <fullName>Nuclear receptor subfamily 3 group C member 2</fullName>
    </alternativeName>
</protein>
<reference key="1">
    <citation type="journal article" date="1998" name="Brain Res. Mol. Brain Res.">
        <title>Cloning of glucocorticoid receptor and mineralocorticoid receptor cDNA and gene expression in the central nervous system of the tree shrew (Tupaia belangeri).</title>
        <authorList>
            <person name="Meyer U."/>
            <person name="Kruhoeffer M."/>
            <person name="Flugge G."/>
            <person name="Fuchs E."/>
        </authorList>
    </citation>
    <scope>NUCLEOTIDE SEQUENCE [MRNA]</scope>
    <source>
        <tissue>Brain</tissue>
    </source>
</reference>
<reference key="2">
    <citation type="submission" date="1995-01" db="EMBL/GenBank/DDBJ databases">
        <authorList>
            <person name="Kruhoeffer M."/>
            <person name="Klingenberg M."/>
            <person name="Fuchs E."/>
            <person name="Forssmann W.-G."/>
        </authorList>
    </citation>
    <scope>NUCLEOTIDE SEQUENCE [MRNA] OF 64-431</scope>
    <source>
        <tissue>Colon</tissue>
    </source>
</reference>
<proteinExistence type="evidence at transcript level"/>
<feature type="chain" id="PRO_0000053690" description="Mineralocorticoid receptor">
    <location>
        <begin position="1"/>
        <end position="977"/>
    </location>
</feature>
<feature type="domain" description="NR LBD" evidence="5">
    <location>
        <begin position="719"/>
        <end position="957"/>
    </location>
</feature>
<feature type="DNA-binding region" description="Nuclear receptor" evidence="4">
    <location>
        <begin position="602"/>
        <end position="667"/>
    </location>
</feature>
<feature type="zinc finger region" description="NR C4-type" evidence="4">
    <location>
        <begin position="602"/>
        <end position="622"/>
    </location>
</feature>
<feature type="zinc finger region" description="NR C4-type" evidence="4">
    <location>
        <begin position="638"/>
        <end position="662"/>
    </location>
</feature>
<feature type="region of interest" description="Modulating">
    <location>
        <begin position="1"/>
        <end position="601"/>
    </location>
</feature>
<feature type="region of interest" description="Disordered" evidence="6">
    <location>
        <begin position="1"/>
        <end position="37"/>
    </location>
</feature>
<feature type="region of interest" description="Disordered" evidence="6">
    <location>
        <begin position="231"/>
        <end position="288"/>
    </location>
</feature>
<feature type="region of interest" description="Disordered" evidence="6">
    <location>
        <begin position="305"/>
        <end position="327"/>
    </location>
</feature>
<feature type="region of interest" description="Disordered" evidence="6">
    <location>
        <begin position="344"/>
        <end position="368"/>
    </location>
</feature>
<feature type="region of interest" description="Hinge">
    <location>
        <begin position="668"/>
        <end position="718"/>
    </location>
</feature>
<feature type="region of interest" description="Disordered" evidence="6">
    <location>
        <begin position="682"/>
        <end position="703"/>
    </location>
</feature>
<feature type="region of interest" description="Important for coactivator binding" evidence="1">
    <location>
        <begin position="775"/>
        <end position="778"/>
    </location>
</feature>
<feature type="compositionally biased region" description="Basic and acidic residues" evidence="6">
    <location>
        <begin position="1"/>
        <end position="19"/>
    </location>
</feature>
<feature type="compositionally biased region" description="Polar residues" evidence="6">
    <location>
        <begin position="231"/>
        <end position="243"/>
    </location>
</feature>
<feature type="compositionally biased region" description="Low complexity" evidence="6">
    <location>
        <begin position="259"/>
        <end position="288"/>
    </location>
</feature>
<feature type="binding site" evidence="2">
    <location>
        <position position="602"/>
    </location>
    <ligand>
        <name>Zn(2+)</name>
        <dbReference type="ChEBI" id="CHEBI:29105"/>
        <label>1</label>
    </ligand>
</feature>
<feature type="binding site" evidence="2">
    <location>
        <position position="605"/>
    </location>
    <ligand>
        <name>Zn(2+)</name>
        <dbReference type="ChEBI" id="CHEBI:29105"/>
        <label>1</label>
    </ligand>
</feature>
<feature type="binding site" evidence="2">
    <location>
        <position position="619"/>
    </location>
    <ligand>
        <name>Zn(2+)</name>
        <dbReference type="ChEBI" id="CHEBI:29105"/>
        <label>1</label>
    </ligand>
</feature>
<feature type="binding site" evidence="2">
    <location>
        <position position="622"/>
    </location>
    <ligand>
        <name>Zn(2+)</name>
        <dbReference type="ChEBI" id="CHEBI:29105"/>
        <label>1</label>
    </ligand>
</feature>
<feature type="binding site" evidence="2">
    <location>
        <position position="638"/>
    </location>
    <ligand>
        <name>Zn(2+)</name>
        <dbReference type="ChEBI" id="CHEBI:29105"/>
        <label>2</label>
    </ligand>
</feature>
<feature type="binding site" evidence="2">
    <location>
        <position position="644"/>
    </location>
    <ligand>
        <name>Zn(2+)</name>
        <dbReference type="ChEBI" id="CHEBI:29105"/>
        <label>2</label>
    </ligand>
</feature>
<feature type="binding site" evidence="2">
    <location>
        <position position="654"/>
    </location>
    <ligand>
        <name>Zn(2+)</name>
        <dbReference type="ChEBI" id="CHEBI:29105"/>
        <label>2</label>
    </ligand>
</feature>
<feature type="binding site" evidence="2">
    <location>
        <position position="657"/>
    </location>
    <ligand>
        <name>Zn(2+)</name>
        <dbReference type="ChEBI" id="CHEBI:29105"/>
        <label>2</label>
    </ligand>
</feature>
<feature type="binding site" evidence="2">
    <location>
        <position position="763"/>
    </location>
    <ligand>
        <name>21-hydroxyprogesterone</name>
        <dbReference type="ChEBI" id="CHEBI:16973"/>
    </ligand>
</feature>
<feature type="binding site" evidence="2">
    <location>
        <position position="763"/>
    </location>
    <ligand>
        <name>aldosterone</name>
        <dbReference type="ChEBI" id="CHEBI:27584"/>
    </ligand>
</feature>
<feature type="binding site" evidence="2">
    <location>
        <position position="763"/>
    </location>
    <ligand>
        <name>progesterone</name>
        <dbReference type="ChEBI" id="CHEBI:17026"/>
    </ligand>
</feature>
<feature type="binding site" evidence="2">
    <location>
        <position position="769"/>
    </location>
    <ligand>
        <name>21-hydroxyprogesterone</name>
        <dbReference type="ChEBI" id="CHEBI:16973"/>
    </ligand>
</feature>
<feature type="binding site" evidence="2">
    <location>
        <position position="769"/>
    </location>
    <ligand>
        <name>aldosterone</name>
        <dbReference type="ChEBI" id="CHEBI:27584"/>
    </ligand>
</feature>
<feature type="binding site" evidence="2">
    <location>
        <position position="769"/>
    </location>
    <ligand>
        <name>progesterone</name>
        <dbReference type="ChEBI" id="CHEBI:17026"/>
    </ligand>
</feature>
<feature type="binding site" evidence="2">
    <location>
        <position position="810"/>
    </location>
    <ligand>
        <name>21-hydroxyprogesterone</name>
        <dbReference type="ChEBI" id="CHEBI:16973"/>
    </ligand>
</feature>
<feature type="binding site" evidence="2">
    <location>
        <position position="810"/>
    </location>
    <ligand>
        <name>aldosterone</name>
        <dbReference type="ChEBI" id="CHEBI:27584"/>
    </ligand>
</feature>
<feature type="binding site" evidence="2">
    <location>
        <position position="810"/>
    </location>
    <ligand>
        <name>progesterone</name>
        <dbReference type="ChEBI" id="CHEBI:17026"/>
    </ligand>
</feature>
<feature type="binding site" evidence="2">
    <location>
        <position position="938"/>
    </location>
    <ligand>
        <name>21-hydroxyprogesterone</name>
        <dbReference type="ChEBI" id="CHEBI:16973"/>
    </ligand>
</feature>
<feature type="binding site" evidence="2">
    <location>
        <position position="938"/>
    </location>
    <ligand>
        <name>aldosterone</name>
        <dbReference type="ChEBI" id="CHEBI:27584"/>
    </ligand>
</feature>
<feature type="binding site" evidence="2">
    <location>
        <position position="938"/>
    </location>
    <ligand>
        <name>progesterone</name>
        <dbReference type="ChEBI" id="CHEBI:17026"/>
    </ligand>
</feature>
<feature type="modified residue" description="Phosphoserine" evidence="3">
    <location>
        <position position="250"/>
    </location>
</feature>
<feature type="modified residue" description="Phosphoserine" evidence="3">
    <location>
        <position position="259"/>
    </location>
</feature>
<feature type="modified residue" description="Phosphoserine" evidence="3">
    <location>
        <position position="283"/>
    </location>
</feature>
<feature type="modified residue" description="Phosphoserine" evidence="3">
    <location>
        <position position="287"/>
    </location>
</feature>
<feature type="modified residue" description="Phosphoserine" evidence="3">
    <location>
        <position position="299"/>
    </location>
</feature>
<accession>Q29131</accession>
<accession>Q95268</accession>
<sequence>METKGYHSRPEGLDMERRWGQVSQPVDRPSLGPAERTEENNYMEIVNVSCVSGAIPNNSTQGSSKEKQELLPCLQQDNTQSGILTSEIKTELEPKELSATVAESMGLYMDSVREADYAFEQHAQQGSLSPAKIYQNVEQLMKFYKENGHRSSTLSNVSRPSRSFLPDPGSAVNGGVMRAMVKSPILCHEKSPSVCSPLNMTSSVCSPAGINSVSSTTVRFGSFPVHSPITQGTPLTCSPTVDNRGSRSHSPAHASNVGSPLSSPLSSMKSPISSPPSHCSVKSPVSSPNNVTLRSCVSSPANINNSRCSVSSPSKANNRSTLSSPAASTVGSICSPNAFSYPASGASVGSSATRDVIPSPDTHEKGAHEVPFPKTEEVENAISNGVTGQLNIVQYIKPEPDGAFSSSCLGGNSKIHSDSPFSSVPIKQESTKHSCSGASFKGNPTVNPFPFMDGSYFSFMDDKDYYSLSGILGPPVPGFEGNCEGTGFPMGIKQEPDYGIYYPEASIPSSAIVGVNSGGQSFHYRIGAQGTISLSRSARDQSFQHLSSFPPVNTLVESWKSHGDLSARKIDGYPVLEYIPENVSSSTLRSVSTGSSRPSKICLVCGDGASGCHYGVVTCGSCKVFFKRAVEGQHNYLCAGRNDCIIDKIRRKNCPACRLQKCLQAGMNLGARKSKKLGKLKGLHEEQPQQPPPPQSPEEGTTYIAPAKEPSVNTALVPQLSSISRALTPSPVMVLENIEPEIVYAGYDSSKPDTAENLLSTLNRLAGKQMIQVVKWAKVLPGFKNLPLEDQITLIQYSRMCLSSFALSWRSYKHTNSQFFYFAPDLVFNEEKMHQSAMYELCQGMHQISLQFVRLQFTFEEYTFMEVLLLLSTIPKDGLKSQAAFEEMRANYIKELRKMVTKCPNNSGQSWQGFYQLTKFLDSMHDLVSDLLEFCFYTFRELQALKVEFPAMLVEIISDQLPKVESGNAKPLYFHRK</sequence>
<evidence type="ECO:0000250" key="1"/>
<evidence type="ECO:0000250" key="2">
    <source>
        <dbReference type="UniProtKB" id="P08235"/>
    </source>
</evidence>
<evidence type="ECO:0000250" key="3">
    <source>
        <dbReference type="UniProtKB" id="Q8VII8"/>
    </source>
</evidence>
<evidence type="ECO:0000255" key="4">
    <source>
        <dbReference type="PROSITE-ProRule" id="PRU00407"/>
    </source>
</evidence>
<evidence type="ECO:0000255" key="5">
    <source>
        <dbReference type="PROSITE-ProRule" id="PRU01189"/>
    </source>
</evidence>
<evidence type="ECO:0000256" key="6">
    <source>
        <dbReference type="SAM" id="MobiDB-lite"/>
    </source>
</evidence>
<evidence type="ECO:0000305" key="7"/>
<comment type="function">
    <text evidence="1">Receptor for both mineralocorticoids (MC) such as aldosterone and glucocorticoids (GC) such as corticosterone or cortisol. Binds to mineralocorticoid response elements (MRE) and transactivates target genes. The effect of MC is to increase ion and water transport and thus raise extracellular fluid volume and blood pressure and lower potassium levels (By similarity).</text>
</comment>
<comment type="subcellular location">
    <subcellularLocation>
        <location evidence="1">Cytoplasm</location>
    </subcellularLocation>
    <subcellularLocation>
        <location evidence="4">Nucleus</location>
    </subcellularLocation>
    <text evidence="1">Cytoplasmic and nuclear in the absence of ligand, nuclear after ligand-binding.</text>
</comment>
<comment type="domain">
    <text>Composed of three domains: a modulating N-terminal domain, a DNA-binding domain and a C-terminal ligand-binding domain.</text>
</comment>
<comment type="similarity">
    <text evidence="7">Belongs to the nuclear hormone receptor family. NR3 subfamily.</text>
</comment>
<organism>
    <name type="scientific">Tupaia belangeri</name>
    <name type="common">Common tree shrew</name>
    <name type="synonym">Tupaia glis belangeri</name>
    <dbReference type="NCBI Taxonomy" id="37347"/>
    <lineage>
        <taxon>Eukaryota</taxon>
        <taxon>Metazoa</taxon>
        <taxon>Chordata</taxon>
        <taxon>Craniata</taxon>
        <taxon>Vertebrata</taxon>
        <taxon>Euteleostomi</taxon>
        <taxon>Mammalia</taxon>
        <taxon>Eutheria</taxon>
        <taxon>Euarchontoglires</taxon>
        <taxon>Scandentia</taxon>
        <taxon>Tupaiidae</taxon>
        <taxon>Tupaia</taxon>
    </lineage>
</organism>
<dbReference type="EMBL" id="Z75077">
    <property type="protein sequence ID" value="CAA99376.1"/>
    <property type="molecule type" value="mRNA"/>
</dbReference>
<dbReference type="EMBL" id="X83607">
    <property type="protein sequence ID" value="CAA58586.1"/>
    <property type="molecule type" value="mRNA"/>
</dbReference>
<dbReference type="SMR" id="Q29131"/>
<dbReference type="GO" id="GO:0005737">
    <property type="term" value="C:cytoplasm"/>
    <property type="evidence" value="ECO:0007669"/>
    <property type="project" value="UniProtKB-SubCell"/>
</dbReference>
<dbReference type="GO" id="GO:0005634">
    <property type="term" value="C:nucleus"/>
    <property type="evidence" value="ECO:0007669"/>
    <property type="project" value="UniProtKB-SubCell"/>
</dbReference>
<dbReference type="GO" id="GO:0003700">
    <property type="term" value="F:DNA-binding transcription factor activity"/>
    <property type="evidence" value="ECO:0007669"/>
    <property type="project" value="InterPro"/>
</dbReference>
<dbReference type="GO" id="GO:0043565">
    <property type="term" value="F:sequence-specific DNA binding"/>
    <property type="evidence" value="ECO:0007669"/>
    <property type="project" value="InterPro"/>
</dbReference>
<dbReference type="GO" id="GO:0005496">
    <property type="term" value="F:steroid binding"/>
    <property type="evidence" value="ECO:0007669"/>
    <property type="project" value="UniProtKB-KW"/>
</dbReference>
<dbReference type="GO" id="GO:0008270">
    <property type="term" value="F:zinc ion binding"/>
    <property type="evidence" value="ECO:0007669"/>
    <property type="project" value="UniProtKB-KW"/>
</dbReference>
<dbReference type="CDD" id="cd07172">
    <property type="entry name" value="NR_DBD_GR_PR"/>
    <property type="match status" value="1"/>
</dbReference>
<dbReference type="CDD" id="cd07075">
    <property type="entry name" value="NR_LBD_MR"/>
    <property type="match status" value="1"/>
</dbReference>
<dbReference type="FunFam" id="1.10.565.10:FF:000004">
    <property type="entry name" value="Androgen receptor variant"/>
    <property type="match status" value="1"/>
</dbReference>
<dbReference type="FunFam" id="3.30.50.10:FF:000029">
    <property type="entry name" value="mineralocorticoid receptor isoform X1"/>
    <property type="match status" value="1"/>
</dbReference>
<dbReference type="Gene3D" id="3.30.50.10">
    <property type="entry name" value="Erythroid Transcription Factor GATA-1, subunit A"/>
    <property type="match status" value="1"/>
</dbReference>
<dbReference type="Gene3D" id="1.10.565.10">
    <property type="entry name" value="Retinoid X Receptor"/>
    <property type="match status" value="1"/>
</dbReference>
<dbReference type="InterPro" id="IPR035500">
    <property type="entry name" value="NHR-like_dom_sf"/>
</dbReference>
<dbReference type="InterPro" id="IPR000536">
    <property type="entry name" value="Nucl_hrmn_rcpt_lig-bd"/>
</dbReference>
<dbReference type="InterPro" id="IPR050200">
    <property type="entry name" value="Nuclear_hormone_rcpt_NR3"/>
</dbReference>
<dbReference type="InterPro" id="IPR001628">
    <property type="entry name" value="Znf_hrmn_rcpt"/>
</dbReference>
<dbReference type="InterPro" id="IPR013088">
    <property type="entry name" value="Znf_NHR/GATA"/>
</dbReference>
<dbReference type="PANTHER" id="PTHR48092">
    <property type="entry name" value="KNIRPS-RELATED PROTEIN-RELATED"/>
    <property type="match status" value="1"/>
</dbReference>
<dbReference type="Pfam" id="PF00104">
    <property type="entry name" value="Hormone_recep"/>
    <property type="match status" value="1"/>
</dbReference>
<dbReference type="Pfam" id="PF00105">
    <property type="entry name" value="zf-C4"/>
    <property type="match status" value="1"/>
</dbReference>
<dbReference type="PRINTS" id="PR00047">
    <property type="entry name" value="STROIDFINGER"/>
</dbReference>
<dbReference type="SMART" id="SM00430">
    <property type="entry name" value="HOLI"/>
    <property type="match status" value="1"/>
</dbReference>
<dbReference type="SMART" id="SM00399">
    <property type="entry name" value="ZnF_C4"/>
    <property type="match status" value="1"/>
</dbReference>
<dbReference type="SUPFAM" id="SSF57716">
    <property type="entry name" value="Glucocorticoid receptor-like (DNA-binding domain)"/>
    <property type="match status" value="1"/>
</dbReference>
<dbReference type="SUPFAM" id="SSF48508">
    <property type="entry name" value="Nuclear receptor ligand-binding domain"/>
    <property type="match status" value="1"/>
</dbReference>
<dbReference type="PROSITE" id="PS51843">
    <property type="entry name" value="NR_LBD"/>
    <property type="match status" value="1"/>
</dbReference>
<dbReference type="PROSITE" id="PS00031">
    <property type="entry name" value="NUCLEAR_REC_DBD_1"/>
    <property type="match status" value="1"/>
</dbReference>
<dbReference type="PROSITE" id="PS51030">
    <property type="entry name" value="NUCLEAR_REC_DBD_2"/>
    <property type="match status" value="1"/>
</dbReference>